<gene>
    <name evidence="1" type="primary">rpoZ</name>
    <name type="ordered locus">Dtpsy_0863</name>
</gene>
<comment type="function">
    <text evidence="1">Promotes RNA polymerase assembly. Latches the N- and C-terminal regions of the beta' subunit thereby facilitating its interaction with the beta and alpha subunits.</text>
</comment>
<comment type="catalytic activity">
    <reaction evidence="1">
        <text>RNA(n) + a ribonucleoside 5'-triphosphate = RNA(n+1) + diphosphate</text>
        <dbReference type="Rhea" id="RHEA:21248"/>
        <dbReference type="Rhea" id="RHEA-COMP:14527"/>
        <dbReference type="Rhea" id="RHEA-COMP:17342"/>
        <dbReference type="ChEBI" id="CHEBI:33019"/>
        <dbReference type="ChEBI" id="CHEBI:61557"/>
        <dbReference type="ChEBI" id="CHEBI:140395"/>
        <dbReference type="EC" id="2.7.7.6"/>
    </reaction>
</comment>
<comment type="subunit">
    <text evidence="1">The RNAP catalytic core consists of 2 alpha, 1 beta, 1 beta' and 1 omega subunit. When a sigma factor is associated with the core the holoenzyme is formed, which can initiate transcription.</text>
</comment>
<comment type="similarity">
    <text evidence="1">Belongs to the RNA polymerase subunit omega family.</text>
</comment>
<feature type="chain" id="PRO_1000194792" description="DNA-directed RNA polymerase subunit omega">
    <location>
        <begin position="1"/>
        <end position="67"/>
    </location>
</feature>
<keyword id="KW-0240">DNA-directed RNA polymerase</keyword>
<keyword id="KW-0548">Nucleotidyltransferase</keyword>
<keyword id="KW-1185">Reference proteome</keyword>
<keyword id="KW-0804">Transcription</keyword>
<keyword id="KW-0808">Transferase</keyword>
<name>RPOZ_ACIET</name>
<dbReference type="EC" id="2.7.7.6" evidence="1"/>
<dbReference type="EMBL" id="CP001392">
    <property type="protein sequence ID" value="ACM32341.1"/>
    <property type="molecule type" value="Genomic_DNA"/>
</dbReference>
<dbReference type="RefSeq" id="WP_011804389.1">
    <property type="nucleotide sequence ID" value="NC_011992.1"/>
</dbReference>
<dbReference type="SMR" id="B9MEK5"/>
<dbReference type="GeneID" id="84682588"/>
<dbReference type="KEGG" id="dia:Dtpsy_0863"/>
<dbReference type="eggNOG" id="COG1758">
    <property type="taxonomic scope" value="Bacteria"/>
</dbReference>
<dbReference type="HOGENOM" id="CLU_125406_5_1_4"/>
<dbReference type="Proteomes" id="UP000000450">
    <property type="component" value="Chromosome"/>
</dbReference>
<dbReference type="GO" id="GO:0000428">
    <property type="term" value="C:DNA-directed RNA polymerase complex"/>
    <property type="evidence" value="ECO:0007669"/>
    <property type="project" value="UniProtKB-KW"/>
</dbReference>
<dbReference type="GO" id="GO:0003677">
    <property type="term" value="F:DNA binding"/>
    <property type="evidence" value="ECO:0007669"/>
    <property type="project" value="UniProtKB-UniRule"/>
</dbReference>
<dbReference type="GO" id="GO:0003899">
    <property type="term" value="F:DNA-directed RNA polymerase activity"/>
    <property type="evidence" value="ECO:0007669"/>
    <property type="project" value="UniProtKB-UniRule"/>
</dbReference>
<dbReference type="GO" id="GO:0006351">
    <property type="term" value="P:DNA-templated transcription"/>
    <property type="evidence" value="ECO:0007669"/>
    <property type="project" value="UniProtKB-UniRule"/>
</dbReference>
<dbReference type="Gene3D" id="3.90.940.10">
    <property type="match status" value="1"/>
</dbReference>
<dbReference type="HAMAP" id="MF_00366">
    <property type="entry name" value="RNApol_bact_RpoZ"/>
    <property type="match status" value="1"/>
</dbReference>
<dbReference type="InterPro" id="IPR003716">
    <property type="entry name" value="DNA-dir_RNA_pol_omega"/>
</dbReference>
<dbReference type="InterPro" id="IPR006110">
    <property type="entry name" value="Pol_omega/Rpo6/RPB6"/>
</dbReference>
<dbReference type="InterPro" id="IPR036161">
    <property type="entry name" value="RPB6/omega-like_sf"/>
</dbReference>
<dbReference type="NCBIfam" id="TIGR00690">
    <property type="entry name" value="rpoZ"/>
    <property type="match status" value="1"/>
</dbReference>
<dbReference type="PANTHER" id="PTHR34476">
    <property type="entry name" value="DNA-DIRECTED RNA POLYMERASE SUBUNIT OMEGA"/>
    <property type="match status" value="1"/>
</dbReference>
<dbReference type="PANTHER" id="PTHR34476:SF1">
    <property type="entry name" value="DNA-DIRECTED RNA POLYMERASE SUBUNIT OMEGA"/>
    <property type="match status" value="1"/>
</dbReference>
<dbReference type="Pfam" id="PF01192">
    <property type="entry name" value="RNA_pol_Rpb6"/>
    <property type="match status" value="1"/>
</dbReference>
<dbReference type="SMART" id="SM01409">
    <property type="entry name" value="RNA_pol_Rpb6"/>
    <property type="match status" value="1"/>
</dbReference>
<dbReference type="SUPFAM" id="SSF63562">
    <property type="entry name" value="RPB6/omega subunit-like"/>
    <property type="match status" value="1"/>
</dbReference>
<reference key="1">
    <citation type="submission" date="2009-01" db="EMBL/GenBank/DDBJ databases">
        <title>Complete sequence of Diaphorobacter sp. TPSY.</title>
        <authorList>
            <consortium name="US DOE Joint Genome Institute"/>
            <person name="Lucas S."/>
            <person name="Copeland A."/>
            <person name="Lapidus A."/>
            <person name="Glavina del Rio T."/>
            <person name="Tice H."/>
            <person name="Bruce D."/>
            <person name="Goodwin L."/>
            <person name="Pitluck S."/>
            <person name="Chertkov O."/>
            <person name="Brettin T."/>
            <person name="Detter J.C."/>
            <person name="Han C."/>
            <person name="Larimer F."/>
            <person name="Land M."/>
            <person name="Hauser L."/>
            <person name="Kyrpides N."/>
            <person name="Mikhailova N."/>
            <person name="Coates J.D."/>
        </authorList>
    </citation>
    <scope>NUCLEOTIDE SEQUENCE [LARGE SCALE GENOMIC DNA]</scope>
    <source>
        <strain>TPSY</strain>
    </source>
</reference>
<evidence type="ECO:0000255" key="1">
    <source>
        <dbReference type="HAMAP-Rule" id="MF_00366"/>
    </source>
</evidence>
<sequence length="67" mass="7388">MARITVEDCLEQIPNRFQLVLAATYRARMLSQGHAPKIESRNKPAVTALREIAAGKVGLEMLKKVPG</sequence>
<organism>
    <name type="scientific">Acidovorax ebreus (strain TPSY)</name>
    <name type="common">Diaphorobacter sp. (strain TPSY)</name>
    <dbReference type="NCBI Taxonomy" id="535289"/>
    <lineage>
        <taxon>Bacteria</taxon>
        <taxon>Pseudomonadati</taxon>
        <taxon>Pseudomonadota</taxon>
        <taxon>Betaproteobacteria</taxon>
        <taxon>Burkholderiales</taxon>
        <taxon>Comamonadaceae</taxon>
        <taxon>Diaphorobacter</taxon>
    </lineage>
</organism>
<proteinExistence type="inferred from homology"/>
<protein>
    <recommendedName>
        <fullName evidence="1">DNA-directed RNA polymerase subunit omega</fullName>
        <shortName evidence="1">RNAP omega subunit</shortName>
        <ecNumber evidence="1">2.7.7.6</ecNumber>
    </recommendedName>
    <alternativeName>
        <fullName evidence="1">RNA polymerase omega subunit</fullName>
    </alternativeName>
    <alternativeName>
        <fullName evidence="1">Transcriptase subunit omega</fullName>
    </alternativeName>
</protein>
<accession>B9MEK5</accession>